<gene>
    <name type="primary">ACS1</name>
    <name type="ordered locus">CAGL0L00649g</name>
</gene>
<organism>
    <name type="scientific">Candida glabrata (strain ATCC 2001 / BCRC 20586 / JCM 3761 / NBRC 0622 / NRRL Y-65 / CBS 138)</name>
    <name type="common">Yeast</name>
    <name type="synonym">Nakaseomyces glabratus</name>
    <dbReference type="NCBI Taxonomy" id="284593"/>
    <lineage>
        <taxon>Eukaryota</taxon>
        <taxon>Fungi</taxon>
        <taxon>Dikarya</taxon>
        <taxon>Ascomycota</taxon>
        <taxon>Saccharomycotina</taxon>
        <taxon>Saccharomycetes</taxon>
        <taxon>Saccharomycetales</taxon>
        <taxon>Saccharomycetaceae</taxon>
        <taxon>Nakaseomyces</taxon>
    </lineage>
</organism>
<feature type="chain" id="PRO_0000208407" description="Acetyl-coenzyme A synthetase 1">
    <location>
        <begin position="1"/>
        <end position="704"/>
    </location>
</feature>
<feature type="short sequence motif" description="Microbody targeting signal" evidence="2">
    <location>
        <begin position="702"/>
        <end position="704"/>
    </location>
</feature>
<feature type="binding site" evidence="1">
    <location>
        <begin position="239"/>
        <end position="242"/>
    </location>
    <ligand>
        <name>CoA</name>
        <dbReference type="ChEBI" id="CHEBI:57287"/>
    </ligand>
</feature>
<feature type="binding site" evidence="1">
    <location>
        <position position="358"/>
    </location>
    <ligand>
        <name>CoA</name>
        <dbReference type="ChEBI" id="CHEBI:57287"/>
    </ligand>
</feature>
<feature type="binding site" evidence="1">
    <location>
        <begin position="434"/>
        <end position="436"/>
    </location>
    <ligand>
        <name>ATP</name>
        <dbReference type="ChEBI" id="CHEBI:30616"/>
    </ligand>
</feature>
<feature type="binding site" evidence="1">
    <location>
        <begin position="458"/>
        <end position="463"/>
    </location>
    <ligand>
        <name>ATP</name>
        <dbReference type="ChEBI" id="CHEBI:30616"/>
    </ligand>
</feature>
<feature type="binding site" evidence="1">
    <location>
        <position position="550"/>
    </location>
    <ligand>
        <name>ATP</name>
        <dbReference type="ChEBI" id="CHEBI:30616"/>
    </ligand>
</feature>
<feature type="binding site" evidence="1">
    <location>
        <position position="565"/>
    </location>
    <ligand>
        <name>ATP</name>
        <dbReference type="ChEBI" id="CHEBI:30616"/>
    </ligand>
</feature>
<feature type="binding site" evidence="1">
    <location>
        <position position="573"/>
    </location>
    <ligand>
        <name>CoA</name>
        <dbReference type="ChEBI" id="CHEBI:57287"/>
    </ligand>
</feature>
<feature type="binding site" evidence="1">
    <location>
        <position position="576"/>
    </location>
    <ligand>
        <name>ATP</name>
        <dbReference type="ChEBI" id="CHEBI:30616"/>
    </ligand>
</feature>
<feature type="binding site" evidence="1">
    <location>
        <position position="641"/>
    </location>
    <ligand>
        <name>CoA</name>
        <dbReference type="ChEBI" id="CHEBI:57287"/>
    </ligand>
</feature>
<comment type="catalytic activity">
    <reaction>
        <text>acetate + ATP + CoA = acetyl-CoA + AMP + diphosphate</text>
        <dbReference type="Rhea" id="RHEA:23176"/>
        <dbReference type="ChEBI" id="CHEBI:30089"/>
        <dbReference type="ChEBI" id="CHEBI:30616"/>
        <dbReference type="ChEBI" id="CHEBI:33019"/>
        <dbReference type="ChEBI" id="CHEBI:57287"/>
        <dbReference type="ChEBI" id="CHEBI:57288"/>
        <dbReference type="ChEBI" id="CHEBI:456215"/>
        <dbReference type="EC" id="6.2.1.1"/>
    </reaction>
</comment>
<comment type="subcellular location">
    <subcellularLocation>
        <location evidence="3">Microsome</location>
    </subcellularLocation>
    <subcellularLocation>
        <location evidence="3">Endoplasmic reticulum</location>
    </subcellularLocation>
</comment>
<comment type="similarity">
    <text evidence="3">Belongs to the ATP-dependent AMP-binding enzyme family.</text>
</comment>
<sequence length="704" mass="79263">MSPSAIAEKKQVDNIQEIKDKNQEPAHHEYEHLTNVGVVKQKPIDHRLKDNIKTHYSPHLDGLQEYKRQYQESIENPEKFFSEKARSFMNWFRDFDRVFVPDVDNPTKPSFENNAWFLNGQLNTCYNCVDRHALKTPNKTAIIYEADEPGEGYSMSYKELLEKVCQVAQILKYSMNVKKGDTVAVYMPMIPEALITLLAISRIGAIHSVVFAGFSSNSLRDRINDAGSRVVITADESNRGGKIIETKRIVDDALRETPQVEHVLVYRRTNNPQVNFQAPRDLDWETERKKYKTYFPCEPVDSEHPLFLLYTSGSTGTPKGVQHSTAGYLLGALLTMRYTFDVHQEDVFFTAGDIGWITGHTYCVYGPLLYGCTTLVFEGTPAYPNFSRYWEIIDKHQVTQFYVAPTALRLLKRAGDSFIDGFSLKSLRCLGSVGEPIAAEVWEWYSDKIGKNEIPIVDTYWQTESGSHLVTPLAGGVTPMKPGSASLPFFGIETVILDPTTGEEINDSHAEGVLAIKRPWPSFARTIWKNHDRFLDTYLNPYKGYYFTGDGAARDKDGYIWILGRVDDVVNVSGHRLSTAEIEAAIIEDRMVAECAVVGFNDDLTGQAVAAFVVLKDKSTWASASEEELQDIKKHLILTVRKDIGPFAAPKLIVLVDDLPKTRSGKIMRRILRKILAGESDQLGDVSTLSNPGVVKHLIDSVKL</sequence>
<dbReference type="EC" id="6.2.1.1"/>
<dbReference type="EMBL" id="CR380958">
    <property type="protein sequence ID" value="CAG61772.1"/>
    <property type="molecule type" value="Genomic_DNA"/>
</dbReference>
<dbReference type="RefSeq" id="XP_448802.1">
    <property type="nucleotide sequence ID" value="XM_448802.1"/>
</dbReference>
<dbReference type="SMR" id="Q6FLU2"/>
<dbReference type="FunCoup" id="Q6FLU2">
    <property type="interactions" value="545"/>
</dbReference>
<dbReference type="STRING" id="284593.Q6FLU2"/>
<dbReference type="EnsemblFungi" id="CAGL0L00649g-T">
    <property type="protein sequence ID" value="CAGL0L00649g-T-p1"/>
    <property type="gene ID" value="CAGL0L00649g"/>
</dbReference>
<dbReference type="KEGG" id="cgr:2891117"/>
<dbReference type="CGD" id="CAL0136172">
    <property type="gene designation" value="CAGL0L00649g"/>
</dbReference>
<dbReference type="VEuPathDB" id="FungiDB:B1J91_L00649g"/>
<dbReference type="VEuPathDB" id="FungiDB:CAGL0L00649g"/>
<dbReference type="eggNOG" id="KOG1175">
    <property type="taxonomic scope" value="Eukaryota"/>
</dbReference>
<dbReference type="HOGENOM" id="CLU_000022_3_6_1"/>
<dbReference type="InParanoid" id="Q6FLU2"/>
<dbReference type="OMA" id="AIKASWP"/>
<dbReference type="Proteomes" id="UP000002428">
    <property type="component" value="Chromosome L"/>
</dbReference>
<dbReference type="GO" id="GO:0005829">
    <property type="term" value="C:cytosol"/>
    <property type="evidence" value="ECO:0000314"/>
    <property type="project" value="CGD"/>
</dbReference>
<dbReference type="GO" id="GO:0005783">
    <property type="term" value="C:endoplasmic reticulum"/>
    <property type="evidence" value="ECO:0007669"/>
    <property type="project" value="UniProtKB-SubCell"/>
</dbReference>
<dbReference type="GO" id="GO:0003987">
    <property type="term" value="F:acetate-CoA ligase activity"/>
    <property type="evidence" value="ECO:0007669"/>
    <property type="project" value="UniProtKB-EC"/>
</dbReference>
<dbReference type="GO" id="GO:0016880">
    <property type="term" value="F:acid-ammonia (or amide) ligase activity"/>
    <property type="evidence" value="ECO:0007669"/>
    <property type="project" value="EnsemblFungi"/>
</dbReference>
<dbReference type="GO" id="GO:0016208">
    <property type="term" value="F:AMP binding"/>
    <property type="evidence" value="ECO:0007669"/>
    <property type="project" value="InterPro"/>
</dbReference>
<dbReference type="GO" id="GO:0005524">
    <property type="term" value="F:ATP binding"/>
    <property type="evidence" value="ECO:0007669"/>
    <property type="project" value="UniProtKB-KW"/>
</dbReference>
<dbReference type="GO" id="GO:0019654">
    <property type="term" value="P:acetate fermentation"/>
    <property type="evidence" value="ECO:0007669"/>
    <property type="project" value="EnsemblFungi"/>
</dbReference>
<dbReference type="GO" id="GO:0019427">
    <property type="term" value="P:acetyl-CoA biosynthetic process from acetate"/>
    <property type="evidence" value="ECO:0007669"/>
    <property type="project" value="InterPro"/>
</dbReference>
<dbReference type="CDD" id="cd05966">
    <property type="entry name" value="ACS"/>
    <property type="match status" value="1"/>
</dbReference>
<dbReference type="FunFam" id="3.30.300.30:FF:000004">
    <property type="entry name" value="Acetyl-coenzyme A synthetase"/>
    <property type="match status" value="1"/>
</dbReference>
<dbReference type="FunFam" id="3.40.50.12780:FF:000001">
    <property type="entry name" value="Acetyl-coenzyme A synthetase"/>
    <property type="match status" value="1"/>
</dbReference>
<dbReference type="Gene3D" id="3.30.300.30">
    <property type="match status" value="1"/>
</dbReference>
<dbReference type="Gene3D" id="3.40.50.12780">
    <property type="entry name" value="N-terminal domain of ligase-like"/>
    <property type="match status" value="1"/>
</dbReference>
<dbReference type="InterPro" id="IPR011904">
    <property type="entry name" value="Ac_CoA_lig"/>
</dbReference>
<dbReference type="InterPro" id="IPR032387">
    <property type="entry name" value="ACAS_N"/>
</dbReference>
<dbReference type="InterPro" id="IPR025110">
    <property type="entry name" value="AMP-bd_C"/>
</dbReference>
<dbReference type="InterPro" id="IPR045851">
    <property type="entry name" value="AMP-bd_C_sf"/>
</dbReference>
<dbReference type="InterPro" id="IPR020845">
    <property type="entry name" value="AMP-binding_CS"/>
</dbReference>
<dbReference type="InterPro" id="IPR000873">
    <property type="entry name" value="AMP-dep_synth/lig_dom"/>
</dbReference>
<dbReference type="InterPro" id="IPR042099">
    <property type="entry name" value="ANL_N_sf"/>
</dbReference>
<dbReference type="NCBIfam" id="TIGR02188">
    <property type="entry name" value="Ac_CoA_lig_AcsA"/>
    <property type="match status" value="1"/>
</dbReference>
<dbReference type="NCBIfam" id="NF001208">
    <property type="entry name" value="PRK00174.1"/>
    <property type="match status" value="1"/>
</dbReference>
<dbReference type="PANTHER" id="PTHR24095">
    <property type="entry name" value="ACETYL-COENZYME A SYNTHETASE"/>
    <property type="match status" value="1"/>
</dbReference>
<dbReference type="PANTHER" id="PTHR24095:SF14">
    <property type="entry name" value="ACETYL-COENZYME A SYNTHETASE 1"/>
    <property type="match status" value="1"/>
</dbReference>
<dbReference type="Pfam" id="PF16177">
    <property type="entry name" value="ACAS_N"/>
    <property type="match status" value="1"/>
</dbReference>
<dbReference type="Pfam" id="PF00501">
    <property type="entry name" value="AMP-binding"/>
    <property type="match status" value="1"/>
</dbReference>
<dbReference type="Pfam" id="PF13193">
    <property type="entry name" value="AMP-binding_C"/>
    <property type="match status" value="1"/>
</dbReference>
<dbReference type="SUPFAM" id="SSF56801">
    <property type="entry name" value="Acetyl-CoA synthetase-like"/>
    <property type="match status" value="1"/>
</dbReference>
<dbReference type="PROSITE" id="PS00455">
    <property type="entry name" value="AMP_BINDING"/>
    <property type="match status" value="1"/>
</dbReference>
<keyword id="KW-0067">ATP-binding</keyword>
<keyword id="KW-0256">Endoplasmic reticulum</keyword>
<keyword id="KW-0436">Ligase</keyword>
<keyword id="KW-0492">Microsome</keyword>
<keyword id="KW-0547">Nucleotide-binding</keyword>
<keyword id="KW-1185">Reference proteome</keyword>
<protein>
    <recommendedName>
        <fullName>Acetyl-coenzyme A synthetase 1</fullName>
        <ecNumber>6.2.1.1</ecNumber>
    </recommendedName>
    <alternativeName>
        <fullName>Acetate--CoA ligase 1</fullName>
    </alternativeName>
    <alternativeName>
        <fullName>Acyl-activating enzyme 1</fullName>
    </alternativeName>
</protein>
<evidence type="ECO:0000250" key="1"/>
<evidence type="ECO:0000255" key="2"/>
<evidence type="ECO:0000305" key="3"/>
<name>ACS1_CANGA</name>
<accession>Q6FLU2</accession>
<reference key="1">
    <citation type="journal article" date="2004" name="Nature">
        <title>Genome evolution in yeasts.</title>
        <authorList>
            <person name="Dujon B."/>
            <person name="Sherman D."/>
            <person name="Fischer G."/>
            <person name="Durrens P."/>
            <person name="Casaregola S."/>
            <person name="Lafontaine I."/>
            <person name="de Montigny J."/>
            <person name="Marck C."/>
            <person name="Neuveglise C."/>
            <person name="Talla E."/>
            <person name="Goffard N."/>
            <person name="Frangeul L."/>
            <person name="Aigle M."/>
            <person name="Anthouard V."/>
            <person name="Babour A."/>
            <person name="Barbe V."/>
            <person name="Barnay S."/>
            <person name="Blanchin S."/>
            <person name="Beckerich J.-M."/>
            <person name="Beyne E."/>
            <person name="Bleykasten C."/>
            <person name="Boisrame A."/>
            <person name="Boyer J."/>
            <person name="Cattolico L."/>
            <person name="Confanioleri F."/>
            <person name="de Daruvar A."/>
            <person name="Despons L."/>
            <person name="Fabre E."/>
            <person name="Fairhead C."/>
            <person name="Ferry-Dumazet H."/>
            <person name="Groppi A."/>
            <person name="Hantraye F."/>
            <person name="Hennequin C."/>
            <person name="Jauniaux N."/>
            <person name="Joyet P."/>
            <person name="Kachouri R."/>
            <person name="Kerrest A."/>
            <person name="Koszul R."/>
            <person name="Lemaire M."/>
            <person name="Lesur I."/>
            <person name="Ma L."/>
            <person name="Muller H."/>
            <person name="Nicaud J.-M."/>
            <person name="Nikolski M."/>
            <person name="Oztas S."/>
            <person name="Ozier-Kalogeropoulos O."/>
            <person name="Pellenz S."/>
            <person name="Potier S."/>
            <person name="Richard G.-F."/>
            <person name="Straub M.-L."/>
            <person name="Suleau A."/>
            <person name="Swennen D."/>
            <person name="Tekaia F."/>
            <person name="Wesolowski-Louvel M."/>
            <person name="Westhof E."/>
            <person name="Wirth B."/>
            <person name="Zeniou-Meyer M."/>
            <person name="Zivanovic Y."/>
            <person name="Bolotin-Fukuhara M."/>
            <person name="Thierry A."/>
            <person name="Bouchier C."/>
            <person name="Caudron B."/>
            <person name="Scarpelli C."/>
            <person name="Gaillardin C."/>
            <person name="Weissenbach J."/>
            <person name="Wincker P."/>
            <person name="Souciet J.-L."/>
        </authorList>
    </citation>
    <scope>NUCLEOTIDE SEQUENCE [LARGE SCALE GENOMIC DNA]</scope>
    <source>
        <strain>ATCC 2001 / BCRC 20586 / JCM 3761 / NBRC 0622 / NRRL Y-65 / CBS 138</strain>
    </source>
</reference>
<proteinExistence type="inferred from homology"/>